<sequence length="302" mass="33019">MEQNNSLPPFAQGLASPQGAMTPGLPIFSPMMPYGTGLTPQPVQNSNSLSLLEEQQRQQQQQQAASQQQGGMVGGSGQTPQLYHSTQAVSTTTALPGNTPLYTTPLTPMTPITPATPASESSGIVPQLQNIVSTVNLGCKLDLKTIALRARNAEYNPKRFAAVIMRIREPRTTALIFSSGKMVCTGAKSEEQSRLAARKYARVVQKLGFPAKFLDFKIQNMVGSCDVKFPIRLEGLVLTHQQFSSYEPELFPGLIYRMIKPRIVLLIFVSGKVVLTGAKVRGEIYEAFENIYPILKGFRKTS</sequence>
<feature type="chain" id="PRO_0000348608" description="TATA-box-binding protein">
    <location>
        <begin position="1"/>
        <end position="302"/>
    </location>
</feature>
<feature type="repeat" description="1" evidence="2">
    <location>
        <begin position="128"/>
        <end position="204"/>
    </location>
</feature>
<feature type="repeat" description="2" evidence="2">
    <location>
        <begin position="218"/>
        <end position="295"/>
    </location>
</feature>
<feature type="region of interest" description="Disordered" evidence="3">
    <location>
        <begin position="1"/>
        <end position="22"/>
    </location>
</feature>
<feature type="region of interest" description="Disordered" evidence="3">
    <location>
        <begin position="50"/>
        <end position="81"/>
    </location>
</feature>
<feature type="compositionally biased region" description="Low complexity" evidence="3">
    <location>
        <begin position="50"/>
        <end position="70"/>
    </location>
</feature>
<feature type="sequence conflict" description="In Ref. 2; AAQ07596." evidence="10" ref="2">
    <original>C</original>
    <variation>G</variation>
    <location>
        <position position="184"/>
    </location>
</feature>
<reference evidence="12" key="1">
    <citation type="journal article" date="2003" name="Mol. Biol. Evol.">
        <title>Early vertebrate evolution of the TATA-binding protein, TBP.</title>
        <authorList>
            <person name="Bondareva A.A."/>
            <person name="Schmidt E.E."/>
        </authorList>
    </citation>
    <scope>NUCLEOTIDE SEQUENCE [MRNA]</scope>
</reference>
<reference evidence="10 13" key="2">
    <citation type="journal article" date="2004" name="Curr. Biol.">
        <title>TBP2, a vertebrate-specific member of the TBP family, is required in embryonic development of zebrafish.</title>
        <authorList>
            <person name="Bartfai R."/>
            <person name="Balduf C."/>
            <person name="Hilton T."/>
            <person name="Rathmann Y."/>
            <person name="Hadzhiev Y."/>
            <person name="Tora L."/>
            <person name="Orban L."/>
            <person name="Mueller F."/>
        </authorList>
    </citation>
    <scope>NUCLEOTIDE SEQUENCE [MRNA]</scope>
    <scope>TISSUE SPECIFICITY</scope>
    <scope>DEVELOPMENTAL STAGE</scope>
    <source>
        <tissue evidence="13">Gonad</tissue>
    </source>
</reference>
<reference key="3">
    <citation type="journal article" date="2013" name="Nature">
        <title>The zebrafish reference genome sequence and its relationship to the human genome.</title>
        <authorList>
            <person name="Howe K."/>
            <person name="Clark M.D."/>
            <person name="Torroja C.F."/>
            <person name="Torrance J."/>
            <person name="Berthelot C."/>
            <person name="Muffato M."/>
            <person name="Collins J.E."/>
            <person name="Humphray S."/>
            <person name="McLaren K."/>
            <person name="Matthews L."/>
            <person name="McLaren S."/>
            <person name="Sealy I."/>
            <person name="Caccamo M."/>
            <person name="Churcher C."/>
            <person name="Scott C."/>
            <person name="Barrett J.C."/>
            <person name="Koch R."/>
            <person name="Rauch G.J."/>
            <person name="White S."/>
            <person name="Chow W."/>
            <person name="Kilian B."/>
            <person name="Quintais L.T."/>
            <person name="Guerra-Assuncao J.A."/>
            <person name="Zhou Y."/>
            <person name="Gu Y."/>
            <person name="Yen J."/>
            <person name="Vogel J.H."/>
            <person name="Eyre T."/>
            <person name="Redmond S."/>
            <person name="Banerjee R."/>
            <person name="Chi J."/>
            <person name="Fu B."/>
            <person name="Langley E."/>
            <person name="Maguire S.F."/>
            <person name="Laird G.K."/>
            <person name="Lloyd D."/>
            <person name="Kenyon E."/>
            <person name="Donaldson S."/>
            <person name="Sehra H."/>
            <person name="Almeida-King J."/>
            <person name="Loveland J."/>
            <person name="Trevanion S."/>
            <person name="Jones M."/>
            <person name="Quail M."/>
            <person name="Willey D."/>
            <person name="Hunt A."/>
            <person name="Burton J."/>
            <person name="Sims S."/>
            <person name="McLay K."/>
            <person name="Plumb B."/>
            <person name="Davis J."/>
            <person name="Clee C."/>
            <person name="Oliver K."/>
            <person name="Clark R."/>
            <person name="Riddle C."/>
            <person name="Elliot D."/>
            <person name="Threadgold G."/>
            <person name="Harden G."/>
            <person name="Ware D."/>
            <person name="Begum S."/>
            <person name="Mortimore B."/>
            <person name="Kerry G."/>
            <person name="Heath P."/>
            <person name="Phillimore B."/>
            <person name="Tracey A."/>
            <person name="Corby N."/>
            <person name="Dunn M."/>
            <person name="Johnson C."/>
            <person name="Wood J."/>
            <person name="Clark S."/>
            <person name="Pelan S."/>
            <person name="Griffiths G."/>
            <person name="Smith M."/>
            <person name="Glithero R."/>
            <person name="Howden P."/>
            <person name="Barker N."/>
            <person name="Lloyd C."/>
            <person name="Stevens C."/>
            <person name="Harley J."/>
            <person name="Holt K."/>
            <person name="Panagiotidis G."/>
            <person name="Lovell J."/>
            <person name="Beasley H."/>
            <person name="Henderson C."/>
            <person name="Gordon D."/>
            <person name="Auger K."/>
            <person name="Wright D."/>
            <person name="Collins J."/>
            <person name="Raisen C."/>
            <person name="Dyer L."/>
            <person name="Leung K."/>
            <person name="Robertson L."/>
            <person name="Ambridge K."/>
            <person name="Leongamornlert D."/>
            <person name="McGuire S."/>
            <person name="Gilderthorp R."/>
            <person name="Griffiths C."/>
            <person name="Manthravadi D."/>
            <person name="Nichol S."/>
            <person name="Barker G."/>
            <person name="Whitehead S."/>
            <person name="Kay M."/>
            <person name="Brown J."/>
            <person name="Murnane C."/>
            <person name="Gray E."/>
            <person name="Humphries M."/>
            <person name="Sycamore N."/>
            <person name="Barker D."/>
            <person name="Saunders D."/>
            <person name="Wallis J."/>
            <person name="Babbage A."/>
            <person name="Hammond S."/>
            <person name="Mashreghi-Mohammadi M."/>
            <person name="Barr L."/>
            <person name="Martin S."/>
            <person name="Wray P."/>
            <person name="Ellington A."/>
            <person name="Matthews N."/>
            <person name="Ellwood M."/>
            <person name="Woodmansey R."/>
            <person name="Clark G."/>
            <person name="Cooper J."/>
            <person name="Tromans A."/>
            <person name="Grafham D."/>
            <person name="Skuce C."/>
            <person name="Pandian R."/>
            <person name="Andrews R."/>
            <person name="Harrison E."/>
            <person name="Kimberley A."/>
            <person name="Garnett J."/>
            <person name="Fosker N."/>
            <person name="Hall R."/>
            <person name="Garner P."/>
            <person name="Kelly D."/>
            <person name="Bird C."/>
            <person name="Palmer S."/>
            <person name="Gehring I."/>
            <person name="Berger A."/>
            <person name="Dooley C.M."/>
            <person name="Ersan-Urun Z."/>
            <person name="Eser C."/>
            <person name="Geiger H."/>
            <person name="Geisler M."/>
            <person name="Karotki L."/>
            <person name="Kirn A."/>
            <person name="Konantz J."/>
            <person name="Konantz M."/>
            <person name="Oberlander M."/>
            <person name="Rudolph-Geiger S."/>
            <person name="Teucke M."/>
            <person name="Lanz C."/>
            <person name="Raddatz G."/>
            <person name="Osoegawa K."/>
            <person name="Zhu B."/>
            <person name="Rapp A."/>
            <person name="Widaa S."/>
            <person name="Langford C."/>
            <person name="Yang F."/>
            <person name="Schuster S.C."/>
            <person name="Carter N.P."/>
            <person name="Harrow J."/>
            <person name="Ning Z."/>
            <person name="Herrero J."/>
            <person name="Searle S.M."/>
            <person name="Enright A."/>
            <person name="Geisler R."/>
            <person name="Plasterk R.H."/>
            <person name="Lee C."/>
            <person name="Westerfield M."/>
            <person name="de Jong P.J."/>
            <person name="Zon L.I."/>
            <person name="Postlethwait J.H."/>
            <person name="Nusslein-Volhard C."/>
            <person name="Hubbard T.J."/>
            <person name="Roest Crollius H."/>
            <person name="Rogers J."/>
            <person name="Stemple D.L."/>
        </authorList>
    </citation>
    <scope>NUCLEOTIDE SEQUENCE [LARGE SCALE GENOMIC DNA]</scope>
    <source>
        <strain>Tuebingen</strain>
    </source>
</reference>
<reference evidence="14" key="4">
    <citation type="submission" date="2004-01" db="EMBL/GenBank/DDBJ databases">
        <authorList>
            <consortium name="NIH - Zebrafish Gene Collection (ZGC) project"/>
        </authorList>
    </citation>
    <scope>NUCLEOTIDE SEQUENCE [LARGE SCALE MRNA]</scope>
    <source>
        <strain evidence="11">SJD</strain>
    </source>
</reference>
<reference evidence="10" key="5">
    <citation type="journal article" date="2001" name="Curr. Biol.">
        <title>TBP is not universally required for zygotic RNA polymerase II transcription in zebrafish.</title>
        <authorList>
            <person name="Mueller F."/>
            <person name="Lakatos L."/>
            <person name="Dantonel J.-C."/>
            <person name="Straehle U."/>
            <person name="Tora L."/>
        </authorList>
    </citation>
    <scope>FUNCTION</scope>
</reference>
<reference evidence="10" key="6">
    <citation type="journal article" date="2007" name="EMBO J.">
        <title>The TATA-binding protein regulates maternal mRNA degradation and differential zygotic transcription in zebrafish.</title>
        <authorList>
            <person name="Ferg M."/>
            <person name="Sanges R."/>
            <person name="Gehrig J."/>
            <person name="Kiss J."/>
            <person name="Bauer M."/>
            <person name="Lovas A."/>
            <person name="Szabo M."/>
            <person name="Yang L."/>
            <person name="Straehle U."/>
            <person name="Pankratz M.J."/>
            <person name="Olasz F."/>
            <person name="Stupka E."/>
            <person name="Mueller F."/>
        </authorList>
    </citation>
    <scope>FUNCTION</scope>
</reference>
<reference evidence="10" key="7">
    <citation type="journal article" date="2007" name="Nature">
        <title>Initiation of zebrafish haematopoiesis by the TATA-box-binding protein-related factor Trf3.</title>
        <authorList>
            <person name="Hart D.O."/>
            <person name="Raha T."/>
            <person name="Lawson N.D."/>
            <person name="Green M.R."/>
        </authorList>
    </citation>
    <scope>FUNCTION</scope>
</reference>
<comment type="function">
    <text evidence="1 4 6 7">General transcription factor that functions at the core of the DNA-binding multiprotein factor TFIID. Binding of TFIID to the TATA box is the initial transcriptional step of the pre-initiation complex (PIC), playing a role in the activation of eukaryotic genes transcribed by RNA polymerase II (By similarity). Members of the TBP family are differentially required for transcription and development during early embryogenesis. Regulates mRNA levels in the early embryo by both transcriptional and post-transcriptional mechanisms. Required for transcription of a subset of genes at the mid-blastula transition (MBT). Negatively regulates the expression of other embryonic genes, including autoregulation of the tbp promoter itself. Also functions within a transcription-dependent mechanism to direct the temporally-regulated degradation of a subset of maternal mRNAs after the MBT. This is part of a general mechanism to regulate the maternal to zygotic transition and is required for normal embryonic development. Binds to promoters of a subset of genes. Required for gastrulation.</text>
</comment>
<comment type="subcellular location">
    <subcellularLocation>
        <location evidence="1">Nucleus</location>
    </subcellularLocation>
</comment>
<comment type="tissue specificity">
    <text evidence="5">Enriched in testis but hardly detectable in the ovary (at protein level).</text>
</comment>
<comment type="developmental stage">
    <text evidence="5">Expressed both maternally and zygotically. Expression is very low in the zygote, increasing from morula stage onward to reach a peak during early gastrulation. Levels then rapidly decline during neurula and organogenesis stages (at protein level). There is an inverse correlation between mRNA and protein levels at the late blastula and early gastrula stages.</text>
</comment>
<comment type="similarity">
    <text evidence="2">Belongs to the TBP family.</text>
</comment>
<keyword id="KW-0217">Developmental protein</keyword>
<keyword id="KW-0238">DNA-binding</keyword>
<keyword id="KW-0306">Gastrulation</keyword>
<keyword id="KW-0539">Nucleus</keyword>
<keyword id="KW-1185">Reference proteome</keyword>
<keyword id="KW-0677">Repeat</keyword>
<keyword id="KW-0804">Transcription</keyword>
<keyword id="KW-0805">Transcription regulation</keyword>
<proteinExistence type="evidence at protein level"/>
<protein>
    <recommendedName>
        <fullName evidence="15">TATA-box-binding protein</fullName>
        <shortName evidence="8">zTBP</shortName>
    </recommendedName>
    <alternativeName>
        <fullName evidence="1">TATA sequence-binding protein</fullName>
    </alternativeName>
    <alternativeName>
        <fullName evidence="1">TATA-binding factor</fullName>
    </alternativeName>
    <alternativeName>
        <fullName evidence="1">TATA-box factor</fullName>
        <shortName evidence="9">zfTBF</shortName>
    </alternativeName>
    <alternativeName>
        <fullName evidence="1">Transcription initiation factor TFIID TBP subunit</fullName>
    </alternativeName>
</protein>
<evidence type="ECO:0000250" key="1">
    <source>
        <dbReference type="UniProtKB" id="P20226"/>
    </source>
</evidence>
<evidence type="ECO:0000255" key="2"/>
<evidence type="ECO:0000256" key="3">
    <source>
        <dbReference type="SAM" id="MobiDB-lite"/>
    </source>
</evidence>
<evidence type="ECO:0000269" key="4">
    <source>
    </source>
</evidence>
<evidence type="ECO:0000269" key="5">
    <source>
    </source>
</evidence>
<evidence type="ECO:0000269" key="6">
    <source>
    </source>
</evidence>
<evidence type="ECO:0000269" key="7">
    <source>
    </source>
</evidence>
<evidence type="ECO:0000303" key="8">
    <source>
    </source>
</evidence>
<evidence type="ECO:0000303" key="9">
    <source>
    </source>
</evidence>
<evidence type="ECO:0000305" key="10"/>
<evidence type="ECO:0000312" key="11">
    <source>
        <dbReference type="EMBL" id="AAH55549.1"/>
    </source>
</evidence>
<evidence type="ECO:0000312" key="12">
    <source>
        <dbReference type="EMBL" id="AAO34524.1"/>
    </source>
</evidence>
<evidence type="ECO:0000312" key="13">
    <source>
        <dbReference type="EMBL" id="AAQ07596.1"/>
    </source>
</evidence>
<evidence type="ECO:0000312" key="14">
    <source>
        <dbReference type="EMBL" id="CAK04406.1"/>
    </source>
</evidence>
<evidence type="ECO:0000312" key="15">
    <source>
        <dbReference type="ZFIN" id="ZDB-GENE-030616-563"/>
    </source>
</evidence>
<organism>
    <name type="scientific">Danio rerio</name>
    <name type="common">Zebrafish</name>
    <name type="synonym">Brachydanio rerio</name>
    <dbReference type="NCBI Taxonomy" id="7955"/>
    <lineage>
        <taxon>Eukaryota</taxon>
        <taxon>Metazoa</taxon>
        <taxon>Chordata</taxon>
        <taxon>Craniata</taxon>
        <taxon>Vertebrata</taxon>
        <taxon>Euteleostomi</taxon>
        <taxon>Actinopterygii</taxon>
        <taxon>Neopterygii</taxon>
        <taxon>Teleostei</taxon>
        <taxon>Ostariophysi</taxon>
        <taxon>Cypriniformes</taxon>
        <taxon>Danionidae</taxon>
        <taxon>Danioninae</taxon>
        <taxon>Danio</taxon>
    </lineage>
</organism>
<accession>Q7SXL3</accession>
<accession>Q71H62</accession>
<name>TBP_DANRE</name>
<dbReference type="EMBL" id="AY168633">
    <property type="protein sequence ID" value="AAO34524.1"/>
    <property type="molecule type" value="mRNA"/>
</dbReference>
<dbReference type="EMBL" id="AF503449">
    <property type="protein sequence ID" value="AAQ07596.1"/>
    <property type="molecule type" value="mRNA"/>
</dbReference>
<dbReference type="EMBL" id="AL772388">
    <property type="protein sequence ID" value="CAK04406.1"/>
    <property type="molecule type" value="Genomic_DNA"/>
</dbReference>
<dbReference type="EMBL" id="BC055549">
    <property type="protein sequence ID" value="AAH55549.1"/>
    <property type="molecule type" value="mRNA"/>
</dbReference>
<dbReference type="EMBL" id="BC065860">
    <property type="protein sequence ID" value="AAH65860.1"/>
    <property type="molecule type" value="mRNA"/>
</dbReference>
<dbReference type="RefSeq" id="NP_956390.1">
    <property type="nucleotide sequence ID" value="NM_200096.1"/>
</dbReference>
<dbReference type="SMR" id="Q7SXL3"/>
<dbReference type="FunCoup" id="Q7SXL3">
    <property type="interactions" value="2559"/>
</dbReference>
<dbReference type="STRING" id="7955.ENSDARP00000010211"/>
<dbReference type="PaxDb" id="7955-ENSDARP00000010211"/>
<dbReference type="Ensembl" id="ENSDART00000016211">
    <property type="protein sequence ID" value="ENSDARP00000010211"/>
    <property type="gene ID" value="ENSDARG00000014994"/>
</dbReference>
<dbReference type="Ensembl" id="ENSDART00000181093">
    <property type="protein sequence ID" value="ENSDARP00000154436"/>
    <property type="gene ID" value="ENSDARG00000014994"/>
</dbReference>
<dbReference type="GeneID" id="368882"/>
<dbReference type="KEGG" id="dre:368882"/>
<dbReference type="AGR" id="ZFIN:ZDB-GENE-030616-563"/>
<dbReference type="CTD" id="6908"/>
<dbReference type="ZFIN" id="ZDB-GENE-030616-563">
    <property type="gene designation" value="tbp"/>
</dbReference>
<dbReference type="eggNOG" id="KOG3302">
    <property type="taxonomic scope" value="Eukaryota"/>
</dbReference>
<dbReference type="HOGENOM" id="CLU_060161_1_1_1"/>
<dbReference type="InParanoid" id="Q7SXL3"/>
<dbReference type="OMA" id="NMDQNNS"/>
<dbReference type="OrthoDB" id="2127950at2759"/>
<dbReference type="PhylomeDB" id="Q7SXL3"/>
<dbReference type="TreeFam" id="TF300102"/>
<dbReference type="Reactome" id="R-DRE-6807505">
    <property type="pathway name" value="RNA polymerase II transcribes snRNA genes"/>
</dbReference>
<dbReference type="Reactome" id="R-DRE-9018519">
    <property type="pathway name" value="Estrogen-dependent gene expression"/>
</dbReference>
<dbReference type="PRO" id="PR:Q7SXL3"/>
<dbReference type="Proteomes" id="UP000000437">
    <property type="component" value="Chromosome 13"/>
</dbReference>
<dbReference type="Bgee" id="ENSDARG00000014994">
    <property type="expression patterns" value="Expressed in cleaving embryo and 29 other cell types or tissues"/>
</dbReference>
<dbReference type="GO" id="GO:0005634">
    <property type="term" value="C:nucleus"/>
    <property type="evidence" value="ECO:0000250"/>
    <property type="project" value="UniProtKB"/>
</dbReference>
<dbReference type="GO" id="GO:0005669">
    <property type="term" value="C:transcription factor TFIID complex"/>
    <property type="evidence" value="ECO:0000250"/>
    <property type="project" value="UniProtKB"/>
</dbReference>
<dbReference type="GO" id="GO:0003677">
    <property type="term" value="F:DNA binding"/>
    <property type="evidence" value="ECO:0000314"/>
    <property type="project" value="UniProtKB"/>
</dbReference>
<dbReference type="GO" id="GO:0016251">
    <property type="term" value="F:RNA polymerase II general transcription initiation factor activity"/>
    <property type="evidence" value="ECO:0000318"/>
    <property type="project" value="GO_Central"/>
</dbReference>
<dbReference type="GO" id="GO:0000995">
    <property type="term" value="F:RNA polymerase III general transcription initiation factor activity"/>
    <property type="evidence" value="ECO:0000250"/>
    <property type="project" value="UniProtKB"/>
</dbReference>
<dbReference type="GO" id="GO:0006352">
    <property type="term" value="P:DNA-templated transcription initiation"/>
    <property type="evidence" value="ECO:0000250"/>
    <property type="project" value="ZFIN"/>
</dbReference>
<dbReference type="GO" id="GO:0007369">
    <property type="term" value="P:gastrulation"/>
    <property type="evidence" value="ECO:0000315"/>
    <property type="project" value="UniProtKB"/>
</dbReference>
<dbReference type="GO" id="GO:0006402">
    <property type="term" value="P:mRNA catabolic process"/>
    <property type="evidence" value="ECO:0000315"/>
    <property type="project" value="UniProtKB"/>
</dbReference>
<dbReference type="GO" id="GO:0006366">
    <property type="term" value="P:transcription by RNA polymerase II"/>
    <property type="evidence" value="ECO:0000315"/>
    <property type="project" value="UniProtKB"/>
</dbReference>
<dbReference type="GO" id="GO:0006383">
    <property type="term" value="P:transcription by RNA polymerase III"/>
    <property type="evidence" value="ECO:0000250"/>
    <property type="project" value="UniProtKB"/>
</dbReference>
<dbReference type="CDD" id="cd04516">
    <property type="entry name" value="TBP_eukaryotes"/>
    <property type="match status" value="1"/>
</dbReference>
<dbReference type="FunFam" id="3.30.310.10:FF:000001">
    <property type="entry name" value="TATA-box-binding protein 2"/>
    <property type="match status" value="1"/>
</dbReference>
<dbReference type="FunFam" id="3.30.310.10:FF:000002">
    <property type="entry name" value="TATA-box-binding protein 2"/>
    <property type="match status" value="1"/>
</dbReference>
<dbReference type="Gene3D" id="3.30.310.10">
    <property type="entry name" value="TATA-Binding Protein"/>
    <property type="match status" value="2"/>
</dbReference>
<dbReference type="HAMAP" id="MF_00408">
    <property type="entry name" value="TATA_bind_prot_arch"/>
    <property type="match status" value="1"/>
</dbReference>
<dbReference type="InterPro" id="IPR000814">
    <property type="entry name" value="TBP"/>
</dbReference>
<dbReference type="InterPro" id="IPR030491">
    <property type="entry name" value="TBP_CS"/>
</dbReference>
<dbReference type="InterPro" id="IPR012295">
    <property type="entry name" value="TBP_dom_sf"/>
</dbReference>
<dbReference type="InterPro" id="IPR033710">
    <property type="entry name" value="TBP_eukaryotic"/>
</dbReference>
<dbReference type="PANTHER" id="PTHR10126">
    <property type="entry name" value="TATA-BOX BINDING PROTEIN"/>
    <property type="match status" value="1"/>
</dbReference>
<dbReference type="Pfam" id="PF00352">
    <property type="entry name" value="TBP"/>
    <property type="match status" value="2"/>
</dbReference>
<dbReference type="PRINTS" id="PR00686">
    <property type="entry name" value="TIFACTORIID"/>
</dbReference>
<dbReference type="SUPFAM" id="SSF55945">
    <property type="entry name" value="TATA-box binding protein-like"/>
    <property type="match status" value="2"/>
</dbReference>
<dbReference type="PROSITE" id="PS00351">
    <property type="entry name" value="TFIID"/>
    <property type="match status" value="2"/>
</dbReference>
<gene>
    <name evidence="15" type="primary">tbp</name>
    <name type="ORF">si:ch211-202m22.5</name>
</gene>